<name>ATP6_ACACA</name>
<organism>
    <name type="scientific">Acanthamoeba castellanii</name>
    <name type="common">Amoeba</name>
    <dbReference type="NCBI Taxonomy" id="5755"/>
    <lineage>
        <taxon>Eukaryota</taxon>
        <taxon>Amoebozoa</taxon>
        <taxon>Discosea</taxon>
        <taxon>Longamoebia</taxon>
        <taxon>Centramoebida</taxon>
        <taxon>Acanthamoebidae</taxon>
        <taxon>Acanthamoeba</taxon>
    </lineage>
</organism>
<dbReference type="EMBL" id="U12386">
    <property type="protein sequence ID" value="AAD11855.1"/>
    <property type="molecule type" value="Genomic_DNA"/>
</dbReference>
<dbReference type="PIR" id="S53863">
    <property type="entry name" value="S53863"/>
</dbReference>
<dbReference type="RefSeq" id="NP_042562.1">
    <property type="nucleotide sequence ID" value="NC_001637.1"/>
</dbReference>
<dbReference type="SMR" id="Q37385"/>
<dbReference type="GeneID" id="1734057"/>
<dbReference type="GO" id="GO:0005743">
    <property type="term" value="C:mitochondrial inner membrane"/>
    <property type="evidence" value="ECO:0007669"/>
    <property type="project" value="UniProtKB-SubCell"/>
</dbReference>
<dbReference type="GO" id="GO:0045259">
    <property type="term" value="C:proton-transporting ATP synthase complex"/>
    <property type="evidence" value="ECO:0007669"/>
    <property type="project" value="UniProtKB-KW"/>
</dbReference>
<dbReference type="GO" id="GO:0046933">
    <property type="term" value="F:proton-transporting ATP synthase activity, rotational mechanism"/>
    <property type="evidence" value="ECO:0007669"/>
    <property type="project" value="TreeGrafter"/>
</dbReference>
<dbReference type="CDD" id="cd00310">
    <property type="entry name" value="ATP-synt_Fo_a_6"/>
    <property type="match status" value="1"/>
</dbReference>
<dbReference type="Gene3D" id="1.20.120.220">
    <property type="entry name" value="ATP synthase, F0 complex, subunit A"/>
    <property type="match status" value="1"/>
</dbReference>
<dbReference type="HAMAP" id="MF_01393">
    <property type="entry name" value="ATP_synth_a_bact"/>
    <property type="match status" value="1"/>
</dbReference>
<dbReference type="InterPro" id="IPR000568">
    <property type="entry name" value="ATP_synth_F0_asu"/>
</dbReference>
<dbReference type="InterPro" id="IPR023011">
    <property type="entry name" value="ATP_synth_F0_asu_AS"/>
</dbReference>
<dbReference type="InterPro" id="IPR045083">
    <property type="entry name" value="ATP_synth_F0_asu_bact/mt"/>
</dbReference>
<dbReference type="InterPro" id="IPR035908">
    <property type="entry name" value="F0_ATP_A_sf"/>
</dbReference>
<dbReference type="NCBIfam" id="TIGR01131">
    <property type="entry name" value="ATP_synt_6_or_A"/>
    <property type="match status" value="1"/>
</dbReference>
<dbReference type="NCBIfam" id="NF004482">
    <property type="entry name" value="PRK05815.2-4"/>
    <property type="match status" value="1"/>
</dbReference>
<dbReference type="PANTHER" id="PTHR11410">
    <property type="entry name" value="ATP SYNTHASE SUBUNIT A"/>
    <property type="match status" value="1"/>
</dbReference>
<dbReference type="PANTHER" id="PTHR11410:SF0">
    <property type="entry name" value="ATP SYNTHASE SUBUNIT A"/>
    <property type="match status" value="1"/>
</dbReference>
<dbReference type="Pfam" id="PF00119">
    <property type="entry name" value="ATP-synt_A"/>
    <property type="match status" value="1"/>
</dbReference>
<dbReference type="PRINTS" id="PR00123">
    <property type="entry name" value="ATPASEA"/>
</dbReference>
<dbReference type="SUPFAM" id="SSF81336">
    <property type="entry name" value="F1F0 ATP synthase subunit A"/>
    <property type="match status" value="1"/>
</dbReference>
<dbReference type="PROSITE" id="PS00449">
    <property type="entry name" value="ATPASE_A"/>
    <property type="match status" value="1"/>
</dbReference>
<protein>
    <recommendedName>
        <fullName>ATP synthase subunit a</fullName>
    </recommendedName>
    <alternativeName>
        <fullName>F-ATPase protein 6</fullName>
    </alternativeName>
</protein>
<feature type="chain" id="PRO_0000082079" description="ATP synthase subunit a">
    <location>
        <begin position="1"/>
        <end position="247"/>
    </location>
</feature>
<feature type="transmembrane region" description="Helical" evidence="1">
    <location>
        <begin position="26"/>
        <end position="46"/>
    </location>
</feature>
<feature type="transmembrane region" description="Helical" evidence="1">
    <location>
        <begin position="85"/>
        <end position="105"/>
    </location>
</feature>
<feature type="transmembrane region" description="Helical" evidence="1">
    <location>
        <begin position="115"/>
        <end position="135"/>
    </location>
</feature>
<feature type="transmembrane region" description="Helical" evidence="1">
    <location>
        <begin position="141"/>
        <end position="161"/>
    </location>
</feature>
<feature type="transmembrane region" description="Helical" evidence="1">
    <location>
        <begin position="178"/>
        <end position="198"/>
    </location>
</feature>
<feature type="transmembrane region" description="Helical" evidence="1">
    <location>
        <begin position="205"/>
        <end position="225"/>
    </location>
</feature>
<geneLocation type="mitochondrion"/>
<gene>
    <name type="primary">ATP6</name>
</gene>
<reference key="1">
    <citation type="journal article" date="1995" name="J. Mol. Biol.">
        <title>The mitochondrial DNA of the amoeboid protozoon, Acanthamoeba castellanii: complete sequence, gene content and genome organization.</title>
        <authorList>
            <person name="Burger G."/>
            <person name="Plante I."/>
            <person name="Lonergan K.M."/>
            <person name="Gray M.W."/>
        </authorList>
    </citation>
    <scope>NUCLEOTIDE SEQUENCE [GENOMIC DNA]</scope>
    <source>
        <strain>ATCC 30010 / Neff</strain>
    </source>
</reference>
<keyword id="KW-0066">ATP synthesis</keyword>
<keyword id="KW-0138">CF(0)</keyword>
<keyword id="KW-0375">Hydrogen ion transport</keyword>
<keyword id="KW-0406">Ion transport</keyword>
<keyword id="KW-0472">Membrane</keyword>
<keyword id="KW-0496">Mitochondrion</keyword>
<keyword id="KW-0999">Mitochondrion inner membrane</keyword>
<keyword id="KW-0812">Transmembrane</keyword>
<keyword id="KW-1133">Transmembrane helix</keyword>
<keyword id="KW-0813">Transport</keyword>
<proteinExistence type="inferred from homology"/>
<evidence type="ECO:0000255" key="1"/>
<evidence type="ECO:0000305" key="2"/>
<comment type="function">
    <text>Mitochondrial membrane ATP synthase (F(1)F(0) ATP synthase or Complex V) produces ATP from ADP in the presence of a proton gradient across the membrane which is generated by electron transport complexes of the respiratory chain. F-type ATPases consist of two structural domains, F(1) - containing the extramembraneous catalytic core and F(0) - containing the membrane proton channel, linked together by a central stalk and a peripheral stalk. During catalysis, ATP synthesis in the catalytic domain of F(1) is coupled via a rotary mechanism of the central stalk subunits to proton translocation. Key component of the proton channel; it may play a direct role in the translocation of protons across the membrane.</text>
</comment>
<comment type="subunit">
    <text>F-type ATPases have 2 components, CF(1) - the catalytic core - and CF(0) - the membrane proton channel. CF(1) has five subunits: alpha(3), beta(3), gamma(1), delta(1), epsilon(1). CF(0) has three main subunits: a, b and c.</text>
</comment>
<comment type="subcellular location">
    <subcellularLocation>
        <location>Mitochondrion inner membrane</location>
        <topology>Multi-pass membrane protein</topology>
    </subcellularLocation>
</comment>
<comment type="similarity">
    <text evidence="2">Belongs to the ATPase A chain family.</text>
</comment>
<sequence>MIFNPLEQFRISVLQKLFFGNIDISITNNTIILFVILIGFTFLFYVNYSTNTYIPSKWQYAVENIYLFVLQLFKQQINNIVALKYFPLVLFVFSFILFANLIGLLPYGFTITGHIIFTFQIAFSLFFGITLINFFNNKTEFFNLFVPSGVPKPLIPFLVVIEVVSYLIRPFSLSVRLFANMLAGHTLLNILSAFIFNVFKKYALISFLPLLFIVFIIVLEFCIAIVQAYIFSILTCIYLNDIYNTSH</sequence>
<accession>Q37385</accession>